<evidence type="ECO:0000250" key="1"/>
<evidence type="ECO:0000250" key="2">
    <source>
        <dbReference type="UniProtKB" id="Q9UH65"/>
    </source>
</evidence>
<evidence type="ECO:0000255" key="3"/>
<evidence type="ECO:0000255" key="4">
    <source>
        <dbReference type="PROSITE-ProRule" id="PRU00145"/>
    </source>
</evidence>
<evidence type="ECO:0000256" key="5">
    <source>
        <dbReference type="SAM" id="MobiDB-lite"/>
    </source>
</evidence>
<evidence type="ECO:0000269" key="6">
    <source>
    </source>
</evidence>
<evidence type="ECO:0000269" key="7">
    <source>
    </source>
</evidence>
<evidence type="ECO:0000305" key="8"/>
<organism>
    <name type="scientific">Mus musculus</name>
    <name type="common">Mouse</name>
    <dbReference type="NCBI Taxonomy" id="10090"/>
    <lineage>
        <taxon>Eukaryota</taxon>
        <taxon>Metazoa</taxon>
        <taxon>Chordata</taxon>
        <taxon>Craniata</taxon>
        <taxon>Vertebrata</taxon>
        <taxon>Euteleostomi</taxon>
        <taxon>Mammalia</taxon>
        <taxon>Eutheria</taxon>
        <taxon>Euarchontoglires</taxon>
        <taxon>Glires</taxon>
        <taxon>Rodentia</taxon>
        <taxon>Myomorpha</taxon>
        <taxon>Muroidea</taxon>
        <taxon>Muridae</taxon>
        <taxon>Murinae</taxon>
        <taxon>Mus</taxon>
        <taxon>Mus</taxon>
    </lineage>
</organism>
<feature type="chain" id="PRO_0000240281" description="Switch-associated protein 70">
    <location>
        <begin position="1"/>
        <end position="585"/>
    </location>
</feature>
<feature type="domain" description="PH" evidence="4">
    <location>
        <begin position="210"/>
        <end position="306"/>
    </location>
</feature>
<feature type="region of interest" description="Disordered" evidence="5">
    <location>
        <begin position="347"/>
        <end position="373"/>
    </location>
</feature>
<feature type="coiled-coil region" evidence="3">
    <location>
        <begin position="316"/>
        <end position="529"/>
    </location>
</feature>
<feature type="compositionally biased region" description="Basic and acidic residues" evidence="5">
    <location>
        <begin position="351"/>
        <end position="373"/>
    </location>
</feature>
<feature type="sequence conflict" description="In Ref. 2; BAD32268." evidence="8" ref="2">
    <original>R</original>
    <variation>G</variation>
    <location>
        <position position="2"/>
    </location>
</feature>
<feature type="sequence conflict" description="In Ref. 2; BAD32268." evidence="8" ref="2">
    <original>I</original>
    <variation>V</variation>
    <location>
        <position position="179"/>
    </location>
</feature>
<feature type="sequence conflict" description="In Ref. 4; AAH65136." evidence="8" ref="4">
    <original>G</original>
    <variation>R</variation>
    <location>
        <position position="543"/>
    </location>
</feature>
<dbReference type="EMBL" id="AF053974">
    <property type="protein sequence ID" value="AAC40155.1"/>
    <property type="molecule type" value="mRNA"/>
</dbReference>
<dbReference type="EMBL" id="AK172990">
    <property type="protein sequence ID" value="BAD32268.1"/>
    <property type="status" value="ALT_INIT"/>
    <property type="molecule type" value="mRNA"/>
</dbReference>
<dbReference type="EMBL" id="AK146773">
    <property type="protein sequence ID" value="BAE27422.1"/>
    <property type="molecule type" value="mRNA"/>
</dbReference>
<dbReference type="EMBL" id="AK150621">
    <property type="protein sequence ID" value="BAE29711.1"/>
    <property type="molecule type" value="mRNA"/>
</dbReference>
<dbReference type="EMBL" id="AK163357">
    <property type="protein sequence ID" value="BAE37316.1"/>
    <property type="molecule type" value="mRNA"/>
</dbReference>
<dbReference type="EMBL" id="BC065136">
    <property type="protein sequence ID" value="AAH65136.1"/>
    <property type="molecule type" value="mRNA"/>
</dbReference>
<dbReference type="CCDS" id="CCDS21744.1"/>
<dbReference type="RefSeq" id="NP_033328.3">
    <property type="nucleotide sequence ID" value="NM_009302.3"/>
</dbReference>
<dbReference type="SMR" id="Q6A028"/>
<dbReference type="BioGRID" id="203593">
    <property type="interactions" value="12"/>
</dbReference>
<dbReference type="CORUM" id="Q6A028"/>
<dbReference type="FunCoup" id="Q6A028">
    <property type="interactions" value="3472"/>
</dbReference>
<dbReference type="IntAct" id="Q6A028">
    <property type="interactions" value="1"/>
</dbReference>
<dbReference type="STRING" id="10090.ENSMUSP00000033325"/>
<dbReference type="iPTMnet" id="Q6A028"/>
<dbReference type="PhosphoSitePlus" id="Q6A028"/>
<dbReference type="SwissPalm" id="Q6A028"/>
<dbReference type="jPOST" id="Q6A028"/>
<dbReference type="PaxDb" id="10090-ENSMUSP00000033325"/>
<dbReference type="PeptideAtlas" id="Q6A028"/>
<dbReference type="ProteomicsDB" id="254701"/>
<dbReference type="Pumba" id="Q6A028"/>
<dbReference type="Antibodypedia" id="1856">
    <property type="antibodies" value="404 antibodies from 35 providers"/>
</dbReference>
<dbReference type="DNASU" id="20947"/>
<dbReference type="Ensembl" id="ENSMUST00000033325.9">
    <property type="protein sequence ID" value="ENSMUSP00000033325.8"/>
    <property type="gene ID" value="ENSMUSG00000031015.9"/>
</dbReference>
<dbReference type="GeneID" id="20947"/>
<dbReference type="KEGG" id="mmu:20947"/>
<dbReference type="UCSC" id="uc009jfb.2">
    <property type="organism name" value="mouse"/>
</dbReference>
<dbReference type="AGR" id="MGI:1298390"/>
<dbReference type="CTD" id="23075"/>
<dbReference type="MGI" id="MGI:1298390">
    <property type="gene designation" value="Swap70"/>
</dbReference>
<dbReference type="VEuPathDB" id="HostDB:ENSMUSG00000031015"/>
<dbReference type="eggNOG" id="ENOG502QSXX">
    <property type="taxonomic scope" value="Eukaryota"/>
</dbReference>
<dbReference type="GeneTree" id="ENSGT00950000183017"/>
<dbReference type="HOGENOM" id="CLU_029358_1_0_1"/>
<dbReference type="InParanoid" id="Q6A028"/>
<dbReference type="OMA" id="VEFYKMC"/>
<dbReference type="OrthoDB" id="8434295at2759"/>
<dbReference type="PhylomeDB" id="Q6A028"/>
<dbReference type="TreeFam" id="TF333160"/>
<dbReference type="Reactome" id="R-MMU-9013149">
    <property type="pathway name" value="RAC1 GTPase cycle"/>
</dbReference>
<dbReference type="Reactome" id="R-MMU-9013404">
    <property type="pathway name" value="RAC2 GTPase cycle"/>
</dbReference>
<dbReference type="Reactome" id="R-MMU-9013423">
    <property type="pathway name" value="RAC3 GTPase cycle"/>
</dbReference>
<dbReference type="BioGRID-ORCS" id="20947">
    <property type="hits" value="3 hits in 115 CRISPR screens"/>
</dbReference>
<dbReference type="ChiTaRS" id="Swap70">
    <property type="organism name" value="mouse"/>
</dbReference>
<dbReference type="PRO" id="PR:Q6A028"/>
<dbReference type="Proteomes" id="UP000000589">
    <property type="component" value="Chromosome 7"/>
</dbReference>
<dbReference type="RNAct" id="Q6A028">
    <property type="molecule type" value="protein"/>
</dbReference>
<dbReference type="Bgee" id="ENSMUSG00000031015">
    <property type="expression patterns" value="Expressed in peripheral lymph node and 218 other cell types or tissues"/>
</dbReference>
<dbReference type="GO" id="GO:0015629">
    <property type="term" value="C:actin cytoskeleton"/>
    <property type="evidence" value="ECO:0007669"/>
    <property type="project" value="Ensembl"/>
</dbReference>
<dbReference type="GO" id="GO:0005737">
    <property type="term" value="C:cytoplasm"/>
    <property type="evidence" value="ECO:0007669"/>
    <property type="project" value="UniProtKB-SubCell"/>
</dbReference>
<dbReference type="GO" id="GO:0030027">
    <property type="term" value="C:lamellipodium"/>
    <property type="evidence" value="ECO:0007669"/>
    <property type="project" value="UniProtKB-SubCell"/>
</dbReference>
<dbReference type="GO" id="GO:0005634">
    <property type="term" value="C:nucleus"/>
    <property type="evidence" value="ECO:0000314"/>
    <property type="project" value="MGI"/>
</dbReference>
<dbReference type="GO" id="GO:0005886">
    <property type="term" value="C:plasma membrane"/>
    <property type="evidence" value="ECO:0007669"/>
    <property type="project" value="UniProtKB-SubCell"/>
</dbReference>
<dbReference type="GO" id="GO:0098794">
    <property type="term" value="C:postsynapse"/>
    <property type="evidence" value="ECO:0007669"/>
    <property type="project" value="Ensembl"/>
</dbReference>
<dbReference type="GO" id="GO:0005524">
    <property type="term" value="F:ATP binding"/>
    <property type="evidence" value="ECO:0000314"/>
    <property type="project" value="MGI"/>
</dbReference>
<dbReference type="GO" id="GO:0003677">
    <property type="term" value="F:DNA binding"/>
    <property type="evidence" value="ECO:0000314"/>
    <property type="project" value="MGI"/>
</dbReference>
<dbReference type="GO" id="GO:0051017">
    <property type="term" value="P:actin filament bundle assembly"/>
    <property type="evidence" value="ECO:0000314"/>
    <property type="project" value="CACAO"/>
</dbReference>
<dbReference type="GO" id="GO:0045190">
    <property type="term" value="P:isotype switching"/>
    <property type="evidence" value="ECO:0000314"/>
    <property type="project" value="MGI"/>
</dbReference>
<dbReference type="GO" id="GO:0030835">
    <property type="term" value="P:negative regulation of actin filament depolymerization"/>
    <property type="evidence" value="ECO:0000314"/>
    <property type="project" value="CACAO"/>
</dbReference>
<dbReference type="GO" id="GO:0033633">
    <property type="term" value="P:negative regulation of cell-cell adhesion mediated by integrin"/>
    <property type="evidence" value="ECO:0000315"/>
    <property type="project" value="CACAO"/>
</dbReference>
<dbReference type="GO" id="GO:0032233">
    <property type="term" value="P:positive regulation of actin filament bundle assembly"/>
    <property type="evidence" value="ECO:0000315"/>
    <property type="project" value="CACAO"/>
</dbReference>
<dbReference type="GO" id="GO:0007204">
    <property type="term" value="P:positive regulation of cytosolic calcium ion concentration"/>
    <property type="evidence" value="ECO:0000315"/>
    <property type="project" value="CACAO"/>
</dbReference>
<dbReference type="GO" id="GO:0060754">
    <property type="term" value="P:positive regulation of mast cell chemotaxis"/>
    <property type="evidence" value="ECO:0000315"/>
    <property type="project" value="CACAO"/>
</dbReference>
<dbReference type="GO" id="GO:0008064">
    <property type="term" value="P:regulation of actin polymerization or depolymerization"/>
    <property type="evidence" value="ECO:0000315"/>
    <property type="project" value="CACAO"/>
</dbReference>
<dbReference type="GO" id="GO:0032880">
    <property type="term" value="P:regulation of protein localization"/>
    <property type="evidence" value="ECO:0000315"/>
    <property type="project" value="CACAO"/>
</dbReference>
<dbReference type="GO" id="GO:0016444">
    <property type="term" value="P:somatic cell DNA recombination"/>
    <property type="evidence" value="ECO:0000314"/>
    <property type="project" value="MGI"/>
</dbReference>
<dbReference type="CDD" id="cd13273">
    <property type="entry name" value="PH_SWAP-70"/>
    <property type="match status" value="1"/>
</dbReference>
<dbReference type="FunFam" id="2.30.29.30:FF:000175">
    <property type="entry name" value="switch-associated protein 70 isoform X2"/>
    <property type="match status" value="1"/>
</dbReference>
<dbReference type="Gene3D" id="2.30.29.30">
    <property type="entry name" value="Pleckstrin-homology domain (PH domain)/Phosphotyrosine-binding domain (PTB)"/>
    <property type="match status" value="1"/>
</dbReference>
<dbReference type="InterPro" id="IPR011992">
    <property type="entry name" value="EF-hand-dom_pair"/>
</dbReference>
<dbReference type="InterPro" id="IPR011993">
    <property type="entry name" value="PH-like_dom_sf"/>
</dbReference>
<dbReference type="InterPro" id="IPR001849">
    <property type="entry name" value="PH_domain"/>
</dbReference>
<dbReference type="PANTHER" id="PTHR14383">
    <property type="entry name" value="SWAP-70 RECOMBINASE"/>
    <property type="match status" value="1"/>
</dbReference>
<dbReference type="PANTHER" id="PTHR14383:SF6">
    <property type="entry name" value="SWITCH-ASSOCIATED PROTEIN 70"/>
    <property type="match status" value="1"/>
</dbReference>
<dbReference type="Pfam" id="PF00169">
    <property type="entry name" value="PH"/>
    <property type="match status" value="1"/>
</dbReference>
<dbReference type="SMART" id="SM00233">
    <property type="entry name" value="PH"/>
    <property type="match status" value="1"/>
</dbReference>
<dbReference type="SUPFAM" id="SSF47473">
    <property type="entry name" value="EF-hand"/>
    <property type="match status" value="1"/>
</dbReference>
<dbReference type="SUPFAM" id="SSF50729">
    <property type="entry name" value="PH domain-like"/>
    <property type="match status" value="1"/>
</dbReference>
<dbReference type="PROSITE" id="PS50003">
    <property type="entry name" value="PH_DOMAIN"/>
    <property type="match status" value="1"/>
</dbReference>
<name>SWP70_MOUSE</name>
<reference key="1">
    <citation type="journal article" date="1998" name="J. Biol. Chem.">
        <title>A B-cell-specific DNA recombination complex.</title>
        <authorList>
            <person name="Borggrefe T."/>
            <person name="Wabl M."/>
            <person name="Akhmedov A.T."/>
            <person name="Jessberger R."/>
        </authorList>
    </citation>
    <scope>NUCLEOTIDE SEQUENCE [MRNA]</scope>
    <scope>PROTEIN SEQUENCE OF 1-24</scope>
    <scope>SUBUNIT</scope>
    <scope>SUBCELLULAR LOCATION</scope>
    <scope>TISSUE SPECIFICITY</scope>
    <source>
        <strain>C57BL/6J</strain>
        <tissue>Spleen</tissue>
    </source>
</reference>
<reference key="2">
    <citation type="journal article" date="2004" name="DNA Res.">
        <title>Prediction of the coding sequences of mouse homologues of KIAA gene: IV. The complete nucleotide sequences of 500 mouse KIAA-homologous cDNAs identified by screening of terminal sequences of cDNA clones randomly sampled from size-fractionated libraries.</title>
        <authorList>
            <person name="Okazaki N."/>
            <person name="Kikuno R."/>
            <person name="Ohara R."/>
            <person name="Inamoto S."/>
            <person name="Koseki H."/>
            <person name="Hiraoka S."/>
            <person name="Saga Y."/>
            <person name="Seino S."/>
            <person name="Nishimura M."/>
            <person name="Kaisho T."/>
            <person name="Hoshino K."/>
            <person name="Kitamura H."/>
            <person name="Nagase T."/>
            <person name="Ohara O."/>
            <person name="Koga H."/>
        </authorList>
    </citation>
    <scope>NUCLEOTIDE SEQUENCE [LARGE SCALE MRNA]</scope>
    <source>
        <tissue>Embryonic tail</tissue>
    </source>
</reference>
<reference key="3">
    <citation type="journal article" date="2005" name="Science">
        <title>The transcriptional landscape of the mammalian genome.</title>
        <authorList>
            <person name="Carninci P."/>
            <person name="Kasukawa T."/>
            <person name="Katayama S."/>
            <person name="Gough J."/>
            <person name="Frith M.C."/>
            <person name="Maeda N."/>
            <person name="Oyama R."/>
            <person name="Ravasi T."/>
            <person name="Lenhard B."/>
            <person name="Wells C."/>
            <person name="Kodzius R."/>
            <person name="Shimokawa K."/>
            <person name="Bajic V.B."/>
            <person name="Brenner S.E."/>
            <person name="Batalov S."/>
            <person name="Forrest A.R."/>
            <person name="Zavolan M."/>
            <person name="Davis M.J."/>
            <person name="Wilming L.G."/>
            <person name="Aidinis V."/>
            <person name="Allen J.E."/>
            <person name="Ambesi-Impiombato A."/>
            <person name="Apweiler R."/>
            <person name="Aturaliya R.N."/>
            <person name="Bailey T.L."/>
            <person name="Bansal M."/>
            <person name="Baxter L."/>
            <person name="Beisel K.W."/>
            <person name="Bersano T."/>
            <person name="Bono H."/>
            <person name="Chalk A.M."/>
            <person name="Chiu K.P."/>
            <person name="Choudhary V."/>
            <person name="Christoffels A."/>
            <person name="Clutterbuck D.R."/>
            <person name="Crowe M.L."/>
            <person name="Dalla E."/>
            <person name="Dalrymple B.P."/>
            <person name="de Bono B."/>
            <person name="Della Gatta G."/>
            <person name="di Bernardo D."/>
            <person name="Down T."/>
            <person name="Engstrom P."/>
            <person name="Fagiolini M."/>
            <person name="Faulkner G."/>
            <person name="Fletcher C.F."/>
            <person name="Fukushima T."/>
            <person name="Furuno M."/>
            <person name="Futaki S."/>
            <person name="Gariboldi M."/>
            <person name="Georgii-Hemming P."/>
            <person name="Gingeras T.R."/>
            <person name="Gojobori T."/>
            <person name="Green R.E."/>
            <person name="Gustincich S."/>
            <person name="Harbers M."/>
            <person name="Hayashi Y."/>
            <person name="Hensch T.K."/>
            <person name="Hirokawa N."/>
            <person name="Hill D."/>
            <person name="Huminiecki L."/>
            <person name="Iacono M."/>
            <person name="Ikeo K."/>
            <person name="Iwama A."/>
            <person name="Ishikawa T."/>
            <person name="Jakt M."/>
            <person name="Kanapin A."/>
            <person name="Katoh M."/>
            <person name="Kawasawa Y."/>
            <person name="Kelso J."/>
            <person name="Kitamura H."/>
            <person name="Kitano H."/>
            <person name="Kollias G."/>
            <person name="Krishnan S.P."/>
            <person name="Kruger A."/>
            <person name="Kummerfeld S.K."/>
            <person name="Kurochkin I.V."/>
            <person name="Lareau L.F."/>
            <person name="Lazarevic D."/>
            <person name="Lipovich L."/>
            <person name="Liu J."/>
            <person name="Liuni S."/>
            <person name="McWilliam S."/>
            <person name="Madan Babu M."/>
            <person name="Madera M."/>
            <person name="Marchionni L."/>
            <person name="Matsuda H."/>
            <person name="Matsuzawa S."/>
            <person name="Miki H."/>
            <person name="Mignone F."/>
            <person name="Miyake S."/>
            <person name="Morris K."/>
            <person name="Mottagui-Tabar S."/>
            <person name="Mulder N."/>
            <person name="Nakano N."/>
            <person name="Nakauchi H."/>
            <person name="Ng P."/>
            <person name="Nilsson R."/>
            <person name="Nishiguchi S."/>
            <person name="Nishikawa S."/>
            <person name="Nori F."/>
            <person name="Ohara O."/>
            <person name="Okazaki Y."/>
            <person name="Orlando V."/>
            <person name="Pang K.C."/>
            <person name="Pavan W.J."/>
            <person name="Pavesi G."/>
            <person name="Pesole G."/>
            <person name="Petrovsky N."/>
            <person name="Piazza S."/>
            <person name="Reed J."/>
            <person name="Reid J.F."/>
            <person name="Ring B.Z."/>
            <person name="Ringwald M."/>
            <person name="Rost B."/>
            <person name="Ruan Y."/>
            <person name="Salzberg S.L."/>
            <person name="Sandelin A."/>
            <person name="Schneider C."/>
            <person name="Schoenbach C."/>
            <person name="Sekiguchi K."/>
            <person name="Semple C.A."/>
            <person name="Seno S."/>
            <person name="Sessa L."/>
            <person name="Sheng Y."/>
            <person name="Shibata Y."/>
            <person name="Shimada H."/>
            <person name="Shimada K."/>
            <person name="Silva D."/>
            <person name="Sinclair B."/>
            <person name="Sperling S."/>
            <person name="Stupka E."/>
            <person name="Sugiura K."/>
            <person name="Sultana R."/>
            <person name="Takenaka Y."/>
            <person name="Taki K."/>
            <person name="Tammoja K."/>
            <person name="Tan S.L."/>
            <person name="Tang S."/>
            <person name="Taylor M.S."/>
            <person name="Tegner J."/>
            <person name="Teichmann S.A."/>
            <person name="Ueda H.R."/>
            <person name="van Nimwegen E."/>
            <person name="Verardo R."/>
            <person name="Wei C.L."/>
            <person name="Yagi K."/>
            <person name="Yamanishi H."/>
            <person name="Zabarovsky E."/>
            <person name="Zhu S."/>
            <person name="Zimmer A."/>
            <person name="Hide W."/>
            <person name="Bult C."/>
            <person name="Grimmond S.M."/>
            <person name="Teasdale R.D."/>
            <person name="Liu E.T."/>
            <person name="Brusic V."/>
            <person name="Quackenbush J."/>
            <person name="Wahlestedt C."/>
            <person name="Mattick J.S."/>
            <person name="Hume D.A."/>
            <person name="Kai C."/>
            <person name="Sasaki D."/>
            <person name="Tomaru Y."/>
            <person name="Fukuda S."/>
            <person name="Kanamori-Katayama M."/>
            <person name="Suzuki M."/>
            <person name="Aoki J."/>
            <person name="Arakawa T."/>
            <person name="Iida J."/>
            <person name="Imamura K."/>
            <person name="Itoh M."/>
            <person name="Kato T."/>
            <person name="Kawaji H."/>
            <person name="Kawagashira N."/>
            <person name="Kawashima T."/>
            <person name="Kojima M."/>
            <person name="Kondo S."/>
            <person name="Konno H."/>
            <person name="Nakano K."/>
            <person name="Ninomiya N."/>
            <person name="Nishio T."/>
            <person name="Okada M."/>
            <person name="Plessy C."/>
            <person name="Shibata K."/>
            <person name="Shiraki T."/>
            <person name="Suzuki S."/>
            <person name="Tagami M."/>
            <person name="Waki K."/>
            <person name="Watahiki A."/>
            <person name="Okamura-Oho Y."/>
            <person name="Suzuki H."/>
            <person name="Kawai J."/>
            <person name="Hayashizaki Y."/>
        </authorList>
    </citation>
    <scope>NUCLEOTIDE SEQUENCE [LARGE SCALE MRNA]</scope>
    <source>
        <strain>C57BL/6J</strain>
        <tissue>Bone marrow</tissue>
        <tissue>Egg</tissue>
    </source>
</reference>
<reference key="4">
    <citation type="journal article" date="2004" name="Genome Res.">
        <title>The status, quality, and expansion of the NIH full-length cDNA project: the Mammalian Gene Collection (MGC).</title>
        <authorList>
            <consortium name="The MGC Project Team"/>
        </authorList>
    </citation>
    <scope>NUCLEOTIDE SEQUENCE [LARGE SCALE MRNA]</scope>
    <source>
        <strain>C57BL/6J</strain>
        <tissue>Eye</tissue>
    </source>
</reference>
<reference key="5">
    <citation type="journal article" date="1999" name="Eur. J. Immunol.">
        <title>Cellular, intracellular, and developmental expression patterns of murine SWAP-70.</title>
        <authorList>
            <person name="Borggrefe T."/>
            <person name="Masat L."/>
            <person name="Wabl M."/>
            <person name="Riwar B."/>
            <person name="Cattoretti G."/>
            <person name="Jessberger R."/>
        </authorList>
    </citation>
    <scope>SUBCELLULAR LOCATION</scope>
    <scope>TISSUE SPECIFICITY</scope>
    <scope>DEVELOPMENTAL STAGE</scope>
</reference>
<reference key="6">
    <citation type="journal article" date="2010" name="Cell">
        <title>A tissue-specific atlas of mouse protein phosphorylation and expression.</title>
        <authorList>
            <person name="Huttlin E.L."/>
            <person name="Jedrychowski M.P."/>
            <person name="Elias J.E."/>
            <person name="Goswami T."/>
            <person name="Rad R."/>
            <person name="Beausoleil S.A."/>
            <person name="Villen J."/>
            <person name="Haas W."/>
            <person name="Sowa M.E."/>
            <person name="Gygi S.P."/>
        </authorList>
    </citation>
    <scope>IDENTIFICATION BY MASS SPECTROMETRY [LARGE SCALE ANALYSIS]</scope>
    <source>
        <tissue>Brain</tissue>
        <tissue>Brown adipose tissue</tissue>
        <tissue>Heart</tissue>
        <tissue>Kidney</tissue>
        <tissue>Liver</tissue>
        <tissue>Lung</tissue>
        <tissue>Pancreas</tissue>
        <tissue>Spleen</tissue>
        <tissue>Testis</tissue>
    </source>
</reference>
<proteinExistence type="evidence at protein level"/>
<comment type="function">
    <text evidence="1">Phosphatidylinositol 3,4,5-trisphosphate-dependent guanine nucleotide exchange factor (GEF) which, independently of RAS, transduces signals from tyrosine kinase receptors to RAC. It also mediates signaling of membrane ruffling. Regulates the actin cytoskeleton as an effector or adapter protein in response to agonist stimulated phosphatidylinositol (3,4)-bisphosphate production and cell protrusion (By similarity).</text>
</comment>
<comment type="subunit">
    <text evidence="7">The SWAP complex consists of NPM1, NCL, PARP1 and SWAP70.</text>
</comment>
<comment type="interaction">
    <interactant intactId="EBI-2121215">
        <id>Q6A028</id>
    </interactant>
    <interactant intactId="EBI-1786329">
        <id>Q61738-6</id>
        <label>Itga7</label>
    </interactant>
    <organismsDiffer>false</organismsDiffer>
    <experiments>2</experiments>
</comment>
<comment type="subcellular location">
    <subcellularLocation>
        <location evidence="6">Cytoplasm</location>
    </subcellularLocation>
    <subcellularLocation>
        <location evidence="2">Cell membrane</location>
    </subcellularLocation>
    <subcellularLocation>
        <location evidence="6 7">Nucleus</location>
    </subcellularLocation>
    <subcellularLocation>
        <location evidence="2">Cell projection</location>
        <location evidence="2">Lamellipodium</location>
    </subcellularLocation>
    <subcellularLocation>
        <location evidence="2">Cytoplasm</location>
        <location evidence="2">Cytoskeleton</location>
    </subcellularLocation>
    <text evidence="6">Localizes predominantly to the nucleus in activated cells. Only a small amount can be detected in the cytoplasm.</text>
</comment>
<comment type="tissue specificity">
    <text evidence="6 7">Spleen. Expressed only in B-cells that have been induced to switch to various Ig isotypes.</text>
</comment>
<comment type="developmental stage">
    <text evidence="6">Not detected in the spleen of 1-week old mice. Detected from 2-weeks onwards and thereafter levels increase and then from 12-weeks onwards levels decline.</text>
</comment>
<comment type="domain">
    <text evidence="1">The PH domain is essential for phosphatidylinositol 3,4,5-trisphosphate binding.</text>
</comment>
<comment type="PTM">
    <text evidence="1">Tyrosine-phosphorylated.</text>
</comment>
<comment type="sequence caution" evidence="8">
    <conflict type="erroneous initiation">
        <sequence resource="EMBL-CDS" id="BAD32268"/>
    </conflict>
</comment>
<accession>Q6A028</accession>
<accession>O88443</accession>
<accession>Q3TQR6</accession>
<accession>Q3UCA3</accession>
<accession>Q6P1D0</accession>
<gene>
    <name type="primary">Swap70</name>
    <name type="synonym">Kiaa0640</name>
</gene>
<sequence length="585" mass="68996">MRGLKDELLKAIWHAFTALDLDRSGKVSKSQLKVLSHNLCTVLKVPHDPVALEEHFRDDDEGPVSNQGYMPYLNKFILEKVQDNFDKIEFNRMCWTLCVKKNLTKSPLLITEDDAFKVWVIFNFLSEDKYPLIIVPEEIEYLLKKLTEAMGGGWQQEQFEHYKINFDDNKDGLSAWELIELIGNGQFSKGMDRQTVSMAINEVFNELILDVLKQGYMMKKGHKRKNWTERWFVLKPNIISYYVSEDLKDKKGDILLDENCCVESLPDKDGKKCLFLIKCFDKTFEISASDKKKKQEWIQAIYSTIHLLKLGSPPPHKEARQRRKELRRKLLAEQEELERQMKELQAANENKQQELESVRKKLEEAASRAADEEKKRLQTQVELQTRFSTELEREKLIRQQMEEQVAQKSSELEQYLQRVRELEDMYLKLQEALEDERQARQDEETVRKLQARLLEEESSKRAELEKWHLEQQQAIQTTEAEKQELEQQRVMKEQALQEAMAQLEQLELERKQALEQYEGVKKKLEMATHMTKSWKDKVAHHEGLIRLIEPGSKNPHLITNWGPAAFTQAELEEREKSWKEKKTTE</sequence>
<keyword id="KW-1003">Cell membrane</keyword>
<keyword id="KW-0966">Cell projection</keyword>
<keyword id="KW-0175">Coiled coil</keyword>
<keyword id="KW-0963">Cytoplasm</keyword>
<keyword id="KW-0206">Cytoskeleton</keyword>
<keyword id="KW-0903">Direct protein sequencing</keyword>
<keyword id="KW-0238">DNA-binding</keyword>
<keyword id="KW-0472">Membrane</keyword>
<keyword id="KW-0539">Nucleus</keyword>
<keyword id="KW-0597">Phosphoprotein</keyword>
<keyword id="KW-1185">Reference proteome</keyword>
<protein>
    <recommendedName>
        <fullName>Switch-associated protein 70</fullName>
        <shortName>SWAP-70</shortName>
    </recommendedName>
</protein>